<organism>
    <name type="scientific">Drosophila melanogaster</name>
    <name type="common">Fruit fly</name>
    <dbReference type="NCBI Taxonomy" id="7227"/>
    <lineage>
        <taxon>Eukaryota</taxon>
        <taxon>Metazoa</taxon>
        <taxon>Ecdysozoa</taxon>
        <taxon>Arthropoda</taxon>
        <taxon>Hexapoda</taxon>
        <taxon>Insecta</taxon>
        <taxon>Pterygota</taxon>
        <taxon>Neoptera</taxon>
        <taxon>Endopterygota</taxon>
        <taxon>Diptera</taxon>
        <taxon>Brachycera</taxon>
        <taxon>Muscomorpha</taxon>
        <taxon>Ephydroidea</taxon>
        <taxon>Drosophilidae</taxon>
        <taxon>Drosophila</taxon>
        <taxon>Sophophora</taxon>
    </lineage>
</organism>
<feature type="chain" id="PRO_0000087145" description="Maternal protein exuperantia">
    <location>
        <begin position="1"/>
        <end position="532"/>
    </location>
</feature>
<feature type="region of interest" description="Disordered" evidence="1">
    <location>
        <begin position="206"/>
        <end position="251"/>
    </location>
</feature>
<feature type="region of interest" description="Disordered" evidence="1">
    <location>
        <begin position="403"/>
        <end position="491"/>
    </location>
</feature>
<feature type="compositionally biased region" description="Low complexity" evidence="1">
    <location>
        <begin position="220"/>
        <end position="231"/>
    </location>
</feature>
<feature type="compositionally biased region" description="Low complexity" evidence="1">
    <location>
        <begin position="404"/>
        <end position="417"/>
    </location>
</feature>
<feature type="compositionally biased region" description="Polar residues" evidence="1">
    <location>
        <begin position="454"/>
        <end position="467"/>
    </location>
</feature>
<feature type="modified residue" description="Phosphoserine" evidence="5">
    <location>
        <position position="467"/>
    </location>
</feature>
<feature type="sequence variant">
    <original>M</original>
    <variation>I</variation>
    <location>
        <position position="223"/>
    </location>
</feature>
<feature type="mutagenesis site" description="In PJ42 mutant; loss of exu function in female." evidence="4">
    <original>R</original>
    <variation>S</variation>
    <location>
        <position position="339"/>
    </location>
</feature>
<feature type="sequence conflict" description="In Ref. 1; AAB20673." evidence="6" ref="1">
    <original>K</original>
    <variation>Q</variation>
    <location>
        <position position="176"/>
    </location>
</feature>
<feature type="strand" evidence="7">
    <location>
        <begin position="33"/>
        <end position="43"/>
    </location>
</feature>
<feature type="strand" evidence="7">
    <location>
        <begin position="51"/>
        <end position="58"/>
    </location>
</feature>
<feature type="strand" evidence="7">
    <location>
        <begin position="61"/>
        <end position="67"/>
    </location>
</feature>
<feature type="helix" evidence="7">
    <location>
        <begin position="75"/>
        <end position="81"/>
    </location>
</feature>
<feature type="strand" evidence="7">
    <location>
        <begin position="83"/>
        <end position="88"/>
    </location>
</feature>
<feature type="strand" evidence="7">
    <location>
        <begin position="91"/>
        <end position="96"/>
    </location>
</feature>
<feature type="turn" evidence="7">
    <location>
        <begin position="97"/>
        <end position="99"/>
    </location>
</feature>
<feature type="strand" evidence="8">
    <location>
        <begin position="101"/>
        <end position="103"/>
    </location>
</feature>
<feature type="helix" evidence="7">
    <location>
        <begin position="108"/>
        <end position="125"/>
    </location>
</feature>
<feature type="strand" evidence="7">
    <location>
        <begin position="132"/>
        <end position="137"/>
    </location>
</feature>
<feature type="helix" evidence="7">
    <location>
        <begin position="144"/>
        <end position="154"/>
    </location>
</feature>
<feature type="helix" evidence="7">
    <location>
        <begin position="158"/>
        <end position="164"/>
    </location>
</feature>
<feature type="strand" evidence="7">
    <location>
        <begin position="165"/>
        <end position="170"/>
    </location>
</feature>
<feature type="helix" evidence="7">
    <location>
        <begin position="172"/>
        <end position="177"/>
    </location>
</feature>
<feature type="helix" evidence="7">
    <location>
        <begin position="189"/>
        <end position="196"/>
    </location>
</feature>
<feature type="helix" evidence="7">
    <location>
        <begin position="261"/>
        <end position="277"/>
    </location>
</feature>
<feature type="helix" evidence="7">
    <location>
        <begin position="287"/>
        <end position="297"/>
    </location>
</feature>
<feature type="helix" evidence="7">
    <location>
        <begin position="298"/>
        <end position="300"/>
    </location>
</feature>
<feature type="strand" evidence="7">
    <location>
        <begin position="301"/>
        <end position="303"/>
    </location>
</feature>
<feature type="helix" evidence="7">
    <location>
        <begin position="304"/>
        <end position="320"/>
    </location>
</feature>
<feature type="turn" evidence="8">
    <location>
        <begin position="325"/>
        <end position="328"/>
    </location>
</feature>
<feature type="helix" evidence="8">
    <location>
        <begin position="329"/>
        <end position="334"/>
    </location>
</feature>
<feature type="helix" evidence="8">
    <location>
        <begin position="336"/>
        <end position="351"/>
    </location>
</feature>
<feature type="helix" evidence="8">
    <location>
        <begin position="356"/>
        <end position="364"/>
    </location>
</feature>
<feature type="helix" evidence="8">
    <location>
        <begin position="371"/>
        <end position="376"/>
    </location>
</feature>
<feature type="helix" evidence="8">
    <location>
        <begin position="383"/>
        <end position="394"/>
    </location>
</feature>
<accession>P28750</accession>
<accession>A4UZR1</accession>
<accession>Q9V967</accession>
<protein>
    <recommendedName>
        <fullName>Maternal protein exuperantia</fullName>
    </recommendedName>
</protein>
<proteinExistence type="evidence at protein level"/>
<evidence type="ECO:0000256" key="1">
    <source>
        <dbReference type="SAM" id="MobiDB-lite"/>
    </source>
</evidence>
<evidence type="ECO:0000269" key="2">
    <source>
    </source>
</evidence>
<evidence type="ECO:0000269" key="3">
    <source>
    </source>
</evidence>
<evidence type="ECO:0000269" key="4">
    <source>
    </source>
</evidence>
<evidence type="ECO:0000269" key="5">
    <source>
    </source>
</evidence>
<evidence type="ECO:0000305" key="6"/>
<evidence type="ECO:0007829" key="7">
    <source>
        <dbReference type="PDB" id="5L7Z"/>
    </source>
</evidence>
<evidence type="ECO:0007829" key="8">
    <source>
        <dbReference type="PDB" id="5L80"/>
    </source>
</evidence>
<name>EXU_DROME</name>
<dbReference type="EMBL" id="S72757">
    <property type="protein sequence ID" value="AAB20673.1"/>
    <property type="molecule type" value="Genomic_DNA"/>
</dbReference>
<dbReference type="EMBL" id="S72363">
    <property type="protein sequence ID" value="AAB20670.1"/>
    <property type="molecule type" value="Genomic_DNA"/>
</dbReference>
<dbReference type="EMBL" id="AE013599">
    <property type="protein sequence ID" value="AAF57429.1"/>
    <property type="molecule type" value="Genomic_DNA"/>
</dbReference>
<dbReference type="EMBL" id="AE013599">
    <property type="protein sequence ID" value="AAF57430.1"/>
    <property type="molecule type" value="Genomic_DNA"/>
</dbReference>
<dbReference type="EMBL" id="AE013599">
    <property type="protein sequence ID" value="AAM68399.1"/>
    <property type="molecule type" value="Genomic_DNA"/>
</dbReference>
<dbReference type="EMBL" id="AY051739">
    <property type="protein sequence ID" value="AAK93163.1"/>
    <property type="molecule type" value="mRNA"/>
</dbReference>
<dbReference type="PIR" id="S18643">
    <property type="entry name" value="S18643"/>
</dbReference>
<dbReference type="RefSeq" id="NP_001163218.1">
    <property type="nucleotide sequence ID" value="NM_001169747.2"/>
</dbReference>
<dbReference type="RefSeq" id="NP_725995.1">
    <property type="nucleotide sequence ID" value="NM_166410.3"/>
</dbReference>
<dbReference type="RefSeq" id="NP_725996.1">
    <property type="nucleotide sequence ID" value="NM_166411.3"/>
</dbReference>
<dbReference type="RefSeq" id="NP_725997.1">
    <property type="nucleotide sequence ID" value="NM_166412.3"/>
</dbReference>
<dbReference type="PDB" id="5L7Z">
    <property type="method" value="X-ray"/>
    <property type="resolution" value="2.37 A"/>
    <property type="chains" value="A=1-333"/>
</dbReference>
<dbReference type="PDB" id="5L80">
    <property type="method" value="X-ray"/>
    <property type="resolution" value="2.80 A"/>
    <property type="chains" value="A/B=1-197, A/B=256-406"/>
</dbReference>
<dbReference type="PDBsum" id="5L7Z"/>
<dbReference type="PDBsum" id="5L80"/>
<dbReference type="SMR" id="P28750"/>
<dbReference type="BioGRID" id="62994">
    <property type="interactions" value="24"/>
</dbReference>
<dbReference type="DIP" id="DIP-21145N"/>
<dbReference type="FunCoup" id="P28750">
    <property type="interactions" value="64"/>
</dbReference>
<dbReference type="IntAct" id="P28750">
    <property type="interactions" value="27"/>
</dbReference>
<dbReference type="MINT" id="P28750"/>
<dbReference type="STRING" id="7227.FBpp0291491"/>
<dbReference type="GlyGen" id="P28750">
    <property type="glycosylation" value="1 site"/>
</dbReference>
<dbReference type="iPTMnet" id="P28750"/>
<dbReference type="PaxDb" id="7227-FBpp0291491"/>
<dbReference type="DNASU" id="37345"/>
<dbReference type="EnsemblMetazoa" id="FBtr0086242">
    <property type="protein sequence ID" value="FBpp0085555"/>
    <property type="gene ID" value="FBgn0000615"/>
</dbReference>
<dbReference type="EnsemblMetazoa" id="FBtr0086243">
    <property type="protein sequence ID" value="FBpp0085556"/>
    <property type="gene ID" value="FBgn0000615"/>
</dbReference>
<dbReference type="EnsemblMetazoa" id="FBtr0086244">
    <property type="protein sequence ID" value="FBpp0085557"/>
    <property type="gene ID" value="FBgn0000615"/>
</dbReference>
<dbReference type="EnsemblMetazoa" id="FBtr0302285">
    <property type="protein sequence ID" value="FBpp0291491"/>
    <property type="gene ID" value="FBgn0000615"/>
</dbReference>
<dbReference type="GeneID" id="37345"/>
<dbReference type="KEGG" id="dme:Dmel_CG8994"/>
<dbReference type="UCSC" id="CG8994-RA">
    <property type="organism name" value="d. melanogaster"/>
</dbReference>
<dbReference type="AGR" id="FB:FBgn0000615"/>
<dbReference type="CTD" id="37345"/>
<dbReference type="FlyBase" id="FBgn0000615">
    <property type="gene designation" value="exu"/>
</dbReference>
<dbReference type="VEuPathDB" id="VectorBase:FBgn0000615"/>
<dbReference type="eggNOG" id="ENOG502QVAD">
    <property type="taxonomic scope" value="Eukaryota"/>
</dbReference>
<dbReference type="HOGENOM" id="CLU_034404_1_0_1"/>
<dbReference type="InParanoid" id="P28750"/>
<dbReference type="OMA" id="NWLEMLV"/>
<dbReference type="OrthoDB" id="8251179at2759"/>
<dbReference type="PhylomeDB" id="P28750"/>
<dbReference type="SignaLink" id="P28750"/>
<dbReference type="BioGRID-ORCS" id="37345">
    <property type="hits" value="0 hits in 1 CRISPR screen"/>
</dbReference>
<dbReference type="CD-CODE" id="19A54EA0">
    <property type="entry name" value="Sponge body"/>
</dbReference>
<dbReference type="GenomeRNAi" id="37345"/>
<dbReference type="PRO" id="PR:P28750"/>
<dbReference type="Proteomes" id="UP000000803">
    <property type="component" value="Chromosome 2R"/>
</dbReference>
<dbReference type="Bgee" id="FBgn0000615">
    <property type="expression patterns" value="Expressed in early elongation stage spermatid (Drosophila) in testis and 80 other cell types or tissues"/>
</dbReference>
<dbReference type="ExpressionAtlas" id="P28750">
    <property type="expression patterns" value="baseline and differential"/>
</dbReference>
<dbReference type="GO" id="GO:0005737">
    <property type="term" value="C:cytoplasm"/>
    <property type="evidence" value="ECO:0000314"/>
    <property type="project" value="UniProtKB"/>
</dbReference>
<dbReference type="GO" id="GO:0036464">
    <property type="term" value="C:cytoplasmic ribonucleoprotein granule"/>
    <property type="evidence" value="ECO:0000314"/>
    <property type="project" value="UniProtKB"/>
</dbReference>
<dbReference type="GO" id="GO:0000932">
    <property type="term" value="C:P-body"/>
    <property type="evidence" value="ECO:0000314"/>
    <property type="project" value="FlyBase"/>
</dbReference>
<dbReference type="GO" id="GO:0071011">
    <property type="term" value="C:precatalytic spliceosome"/>
    <property type="evidence" value="ECO:0007005"/>
    <property type="project" value="FlyBase"/>
</dbReference>
<dbReference type="GO" id="GO:0042803">
    <property type="term" value="F:protein homodimerization activity"/>
    <property type="evidence" value="ECO:0000314"/>
    <property type="project" value="FlyBase"/>
</dbReference>
<dbReference type="GO" id="GO:0003727">
    <property type="term" value="F:single-stranded RNA binding"/>
    <property type="evidence" value="ECO:0000314"/>
    <property type="project" value="FlyBase"/>
</dbReference>
<dbReference type="GO" id="GO:0008595">
    <property type="term" value="P:anterior/posterior axis specification, embryo"/>
    <property type="evidence" value="ECO:0000316"/>
    <property type="project" value="FlyBase"/>
</dbReference>
<dbReference type="GO" id="GO:0045450">
    <property type="term" value="P:bicoid mRNA localization"/>
    <property type="evidence" value="ECO:0000315"/>
    <property type="project" value="UniProtKB"/>
</dbReference>
<dbReference type="GO" id="GO:0001700">
    <property type="term" value="P:embryonic development via the syncytial blastoderm"/>
    <property type="evidence" value="ECO:0007001"/>
    <property type="project" value="FlyBase"/>
</dbReference>
<dbReference type="GO" id="GO:0000398">
    <property type="term" value="P:mRNA splicing, via spliceosome"/>
    <property type="evidence" value="ECO:0000305"/>
    <property type="project" value="FlyBase"/>
</dbReference>
<dbReference type="GO" id="GO:0007300">
    <property type="term" value="P:ovarian nurse cell to oocyte transport"/>
    <property type="evidence" value="ECO:0000304"/>
    <property type="project" value="FlyBase"/>
</dbReference>
<dbReference type="GO" id="GO:0045451">
    <property type="term" value="P:pole plasm oskar mRNA localization"/>
    <property type="evidence" value="ECO:0000304"/>
    <property type="project" value="FlyBase"/>
</dbReference>
<dbReference type="GO" id="GO:0007317">
    <property type="term" value="P:regulation of pole plasm oskar mRNA localization"/>
    <property type="evidence" value="ECO:0000316"/>
    <property type="project" value="FlyBase"/>
</dbReference>
<dbReference type="GO" id="GO:0007283">
    <property type="term" value="P:spermatogenesis"/>
    <property type="evidence" value="ECO:0000304"/>
    <property type="project" value="FlyBase"/>
</dbReference>
<dbReference type="Gene3D" id="3.30.420.10">
    <property type="entry name" value="Ribonuclease H-like superfamily/Ribonuclease H"/>
    <property type="match status" value="1"/>
</dbReference>
<dbReference type="InterPro" id="IPR037998">
    <property type="entry name" value="Exu"/>
</dbReference>
<dbReference type="InterPro" id="IPR054362">
    <property type="entry name" value="Exu_RNase_H-like"/>
</dbReference>
<dbReference type="InterPro" id="IPR036397">
    <property type="entry name" value="RNaseH_sf"/>
</dbReference>
<dbReference type="InterPro" id="IPR040941">
    <property type="entry name" value="SAM_Exu"/>
</dbReference>
<dbReference type="PANTHER" id="PTHR12384">
    <property type="entry name" value="MATERNAL PROTEIN EXUPERANTIA"/>
    <property type="match status" value="1"/>
</dbReference>
<dbReference type="PANTHER" id="PTHR12384:SF2">
    <property type="entry name" value="MATERNAL PROTEIN EXUPERANTIA"/>
    <property type="match status" value="1"/>
</dbReference>
<dbReference type="Pfam" id="PF22123">
    <property type="entry name" value="Exu_RNase_H_like"/>
    <property type="match status" value="1"/>
</dbReference>
<dbReference type="Pfam" id="PF18609">
    <property type="entry name" value="SAM_Exu"/>
    <property type="match status" value="1"/>
</dbReference>
<reference key="1">
    <citation type="journal article" date="1991" name="EMBO J.">
        <title>The temporal and spatial distribution pattern of maternal exuperantia protein: evidence for a role in establishment but not maintenance of bicoid mRNA localization.</title>
        <authorList>
            <person name="Marcey D."/>
            <person name="Watkins W.S."/>
            <person name="Hazelrigg T."/>
        </authorList>
    </citation>
    <scope>NUCLEOTIDE SEQUENCE [GENOMIC DNA]</scope>
    <scope>MUTAGENESIS OF ARG-339</scope>
</reference>
<reference key="2">
    <citation type="journal article" date="1991" name="Genes Dev.">
        <title>Protein encoded by the exuperantia gene is concentrated at sites of bicoid mRNA accumulation in Drosophila nurse cells but not in oocytes or embryos.</title>
        <authorList>
            <person name="Macdonald P.M."/>
            <person name="Luk S.K.-S."/>
            <person name="Kilpatrick M."/>
        </authorList>
    </citation>
    <scope>NUCLEOTIDE SEQUENCE [GENOMIC DNA]</scope>
</reference>
<reference key="3">
    <citation type="journal article" date="2000" name="Science">
        <title>The genome sequence of Drosophila melanogaster.</title>
        <authorList>
            <person name="Adams M.D."/>
            <person name="Celniker S.E."/>
            <person name="Holt R.A."/>
            <person name="Evans C.A."/>
            <person name="Gocayne J.D."/>
            <person name="Amanatides P.G."/>
            <person name="Scherer S.E."/>
            <person name="Li P.W."/>
            <person name="Hoskins R.A."/>
            <person name="Galle R.F."/>
            <person name="George R.A."/>
            <person name="Lewis S.E."/>
            <person name="Richards S."/>
            <person name="Ashburner M."/>
            <person name="Henderson S.N."/>
            <person name="Sutton G.G."/>
            <person name="Wortman J.R."/>
            <person name="Yandell M.D."/>
            <person name="Zhang Q."/>
            <person name="Chen L.X."/>
            <person name="Brandon R.C."/>
            <person name="Rogers Y.-H.C."/>
            <person name="Blazej R.G."/>
            <person name="Champe M."/>
            <person name="Pfeiffer B.D."/>
            <person name="Wan K.H."/>
            <person name="Doyle C."/>
            <person name="Baxter E.G."/>
            <person name="Helt G."/>
            <person name="Nelson C.R."/>
            <person name="Miklos G.L.G."/>
            <person name="Abril J.F."/>
            <person name="Agbayani A."/>
            <person name="An H.-J."/>
            <person name="Andrews-Pfannkoch C."/>
            <person name="Baldwin D."/>
            <person name="Ballew R.M."/>
            <person name="Basu A."/>
            <person name="Baxendale J."/>
            <person name="Bayraktaroglu L."/>
            <person name="Beasley E.M."/>
            <person name="Beeson K.Y."/>
            <person name="Benos P.V."/>
            <person name="Berman B.P."/>
            <person name="Bhandari D."/>
            <person name="Bolshakov S."/>
            <person name="Borkova D."/>
            <person name="Botchan M.R."/>
            <person name="Bouck J."/>
            <person name="Brokstein P."/>
            <person name="Brottier P."/>
            <person name="Burtis K.C."/>
            <person name="Busam D.A."/>
            <person name="Butler H."/>
            <person name="Cadieu E."/>
            <person name="Center A."/>
            <person name="Chandra I."/>
            <person name="Cherry J.M."/>
            <person name="Cawley S."/>
            <person name="Dahlke C."/>
            <person name="Davenport L.B."/>
            <person name="Davies P."/>
            <person name="de Pablos B."/>
            <person name="Delcher A."/>
            <person name="Deng Z."/>
            <person name="Mays A.D."/>
            <person name="Dew I."/>
            <person name="Dietz S.M."/>
            <person name="Dodson K."/>
            <person name="Doup L.E."/>
            <person name="Downes M."/>
            <person name="Dugan-Rocha S."/>
            <person name="Dunkov B.C."/>
            <person name="Dunn P."/>
            <person name="Durbin K.J."/>
            <person name="Evangelista C.C."/>
            <person name="Ferraz C."/>
            <person name="Ferriera S."/>
            <person name="Fleischmann W."/>
            <person name="Fosler C."/>
            <person name="Gabrielian A.E."/>
            <person name="Garg N.S."/>
            <person name="Gelbart W.M."/>
            <person name="Glasser K."/>
            <person name="Glodek A."/>
            <person name="Gong F."/>
            <person name="Gorrell J.H."/>
            <person name="Gu Z."/>
            <person name="Guan P."/>
            <person name="Harris M."/>
            <person name="Harris N.L."/>
            <person name="Harvey D.A."/>
            <person name="Heiman T.J."/>
            <person name="Hernandez J.R."/>
            <person name="Houck J."/>
            <person name="Hostin D."/>
            <person name="Houston K.A."/>
            <person name="Howland T.J."/>
            <person name="Wei M.-H."/>
            <person name="Ibegwam C."/>
            <person name="Jalali M."/>
            <person name="Kalush F."/>
            <person name="Karpen G.H."/>
            <person name="Ke Z."/>
            <person name="Kennison J.A."/>
            <person name="Ketchum K.A."/>
            <person name="Kimmel B.E."/>
            <person name="Kodira C.D."/>
            <person name="Kraft C.L."/>
            <person name="Kravitz S."/>
            <person name="Kulp D."/>
            <person name="Lai Z."/>
            <person name="Lasko P."/>
            <person name="Lei Y."/>
            <person name="Levitsky A.A."/>
            <person name="Li J.H."/>
            <person name="Li Z."/>
            <person name="Liang Y."/>
            <person name="Lin X."/>
            <person name="Liu X."/>
            <person name="Mattei B."/>
            <person name="McIntosh T.C."/>
            <person name="McLeod M.P."/>
            <person name="McPherson D."/>
            <person name="Merkulov G."/>
            <person name="Milshina N.V."/>
            <person name="Mobarry C."/>
            <person name="Morris J."/>
            <person name="Moshrefi A."/>
            <person name="Mount S.M."/>
            <person name="Moy M."/>
            <person name="Murphy B."/>
            <person name="Murphy L."/>
            <person name="Muzny D.M."/>
            <person name="Nelson D.L."/>
            <person name="Nelson D.R."/>
            <person name="Nelson K.A."/>
            <person name="Nixon K."/>
            <person name="Nusskern D.R."/>
            <person name="Pacleb J.M."/>
            <person name="Palazzolo M."/>
            <person name="Pittman G.S."/>
            <person name="Pan S."/>
            <person name="Pollard J."/>
            <person name="Puri V."/>
            <person name="Reese M.G."/>
            <person name="Reinert K."/>
            <person name="Remington K."/>
            <person name="Saunders R.D.C."/>
            <person name="Scheeler F."/>
            <person name="Shen H."/>
            <person name="Shue B.C."/>
            <person name="Siden-Kiamos I."/>
            <person name="Simpson M."/>
            <person name="Skupski M.P."/>
            <person name="Smith T.J."/>
            <person name="Spier E."/>
            <person name="Spradling A.C."/>
            <person name="Stapleton M."/>
            <person name="Strong R."/>
            <person name="Sun E."/>
            <person name="Svirskas R."/>
            <person name="Tector C."/>
            <person name="Turner R."/>
            <person name="Venter E."/>
            <person name="Wang A.H."/>
            <person name="Wang X."/>
            <person name="Wang Z.-Y."/>
            <person name="Wassarman D.A."/>
            <person name="Weinstock G.M."/>
            <person name="Weissenbach J."/>
            <person name="Williams S.M."/>
            <person name="Woodage T."/>
            <person name="Worley K.C."/>
            <person name="Wu D."/>
            <person name="Yang S."/>
            <person name="Yao Q.A."/>
            <person name="Ye J."/>
            <person name="Yeh R.-F."/>
            <person name="Zaveri J.S."/>
            <person name="Zhan M."/>
            <person name="Zhang G."/>
            <person name="Zhao Q."/>
            <person name="Zheng L."/>
            <person name="Zheng X.H."/>
            <person name="Zhong F.N."/>
            <person name="Zhong W."/>
            <person name="Zhou X."/>
            <person name="Zhu S.C."/>
            <person name="Zhu X."/>
            <person name="Smith H.O."/>
            <person name="Gibbs R.A."/>
            <person name="Myers E.W."/>
            <person name="Rubin G.M."/>
            <person name="Venter J.C."/>
        </authorList>
    </citation>
    <scope>NUCLEOTIDE SEQUENCE [LARGE SCALE GENOMIC DNA]</scope>
    <source>
        <strain>Berkeley</strain>
    </source>
</reference>
<reference key="4">
    <citation type="journal article" date="2002" name="Genome Biol.">
        <title>Annotation of the Drosophila melanogaster euchromatic genome: a systematic review.</title>
        <authorList>
            <person name="Misra S."/>
            <person name="Crosby M.A."/>
            <person name="Mungall C.J."/>
            <person name="Matthews B.B."/>
            <person name="Campbell K.S."/>
            <person name="Hradecky P."/>
            <person name="Huang Y."/>
            <person name="Kaminker J.S."/>
            <person name="Millburn G.H."/>
            <person name="Prochnik S.E."/>
            <person name="Smith C.D."/>
            <person name="Tupy J.L."/>
            <person name="Whitfield E.J."/>
            <person name="Bayraktaroglu L."/>
            <person name="Berman B.P."/>
            <person name="Bettencourt B.R."/>
            <person name="Celniker S.E."/>
            <person name="de Grey A.D.N.J."/>
            <person name="Drysdale R.A."/>
            <person name="Harris N.L."/>
            <person name="Richter J."/>
            <person name="Russo S."/>
            <person name="Schroeder A.J."/>
            <person name="Shu S.Q."/>
            <person name="Stapleton M."/>
            <person name="Yamada C."/>
            <person name="Ashburner M."/>
            <person name="Gelbart W.M."/>
            <person name="Rubin G.M."/>
            <person name="Lewis S.E."/>
        </authorList>
    </citation>
    <scope>GENOME REANNOTATION</scope>
    <source>
        <strain>Berkeley</strain>
    </source>
</reference>
<reference key="5">
    <citation type="journal article" date="2002" name="Genome Biol.">
        <title>A Drosophila full-length cDNA resource.</title>
        <authorList>
            <person name="Stapleton M."/>
            <person name="Carlson J.W."/>
            <person name="Brokstein P."/>
            <person name="Yu C."/>
            <person name="Champe M."/>
            <person name="George R.A."/>
            <person name="Guarin H."/>
            <person name="Kronmiller B."/>
            <person name="Pacleb J.M."/>
            <person name="Park S."/>
            <person name="Wan K.H."/>
            <person name="Rubin G.M."/>
            <person name="Celniker S.E."/>
        </authorList>
    </citation>
    <scope>NUCLEOTIDE SEQUENCE [LARGE SCALE MRNA]</scope>
    <source>
        <strain>Berkeley</strain>
        <tissue>Embryo</tissue>
    </source>
</reference>
<reference key="6">
    <citation type="journal article" date="2001" name="Development">
        <title>Me31B silences translation of oocyte-localizing RNAs through the formation of cytoplasmic RNP complex during Drosophila oogenesis.</title>
        <authorList>
            <person name="Nakamura A."/>
            <person name="Amikura R."/>
            <person name="Hanyu K."/>
            <person name="Kobayashi S."/>
        </authorList>
    </citation>
    <scope>IDENTIFICATION IN COMPLEX WITH ME31B; EXU AND YPS</scope>
    <scope>SUBCELLULAR LOCATION</scope>
    <scope>DEVELOPMENTAL STAGE</scope>
</reference>
<reference key="7">
    <citation type="journal article" date="2000" name="J. Cell Biol.">
        <title>Isolation of a ribonucleoprotein complex involved in mRNA localization in Drosophila oocytes.</title>
        <authorList>
            <person name="Wilhelm J.E."/>
            <person name="Mansfield J."/>
            <person name="Hom-Booher N."/>
            <person name="Wang S."/>
            <person name="Turck C.W."/>
            <person name="Hazelrigg T."/>
            <person name="Vale R.D."/>
        </authorList>
    </citation>
    <scope>IDENTIFICATION IN THE OSK RNP COMPLEX</scope>
</reference>
<reference key="8">
    <citation type="journal article" date="2008" name="J. Proteome Res.">
        <title>Phosphoproteome analysis of Drosophila melanogaster embryos.</title>
        <authorList>
            <person name="Zhai B."/>
            <person name="Villen J."/>
            <person name="Beausoleil S.A."/>
            <person name="Mintseris J."/>
            <person name="Gygi S.P."/>
        </authorList>
    </citation>
    <scope>PHOSPHORYLATION [LARGE SCALE ANALYSIS] AT SER-467</scope>
    <scope>IDENTIFICATION BY MASS SPECTROMETRY</scope>
    <source>
        <tissue>Embryo</tissue>
    </source>
</reference>
<gene>
    <name type="primary">exu</name>
    <name type="ORF">CG8994</name>
</gene>
<keyword id="KW-0002">3D-structure</keyword>
<keyword id="KW-0963">Cytoplasm</keyword>
<keyword id="KW-0217">Developmental protein</keyword>
<keyword id="KW-0597">Phosphoprotein</keyword>
<keyword id="KW-1185">Reference proteome</keyword>
<keyword id="KW-0694">RNA-binding</keyword>
<comment type="function">
    <text>Ensures the proper localization of the mRNA of the bicoid gene to the anterior regions of the oocyte thus playing a fundamental role in the establishment of the polarity of the oocyte. May bind the bcd mRNA.</text>
</comment>
<comment type="subunit">
    <text evidence="2 3">Component of the osk RNP complex, which is composed of at least exuperantia (exu), ypsilon schachtel (yps), aret (bruno), cup, and the mRNA of osk (PubMed:10662770). In the sponge body, forms a ribonucleoprotein complex (RNP) containing at least me31B, exu, yps and the mRNA of osk; interactions with exu and yps are RNA dependent (PubMed:11546740).</text>
</comment>
<comment type="subcellular location">
    <subcellularLocation>
        <location evidence="3">Cytoplasm</location>
        <location evidence="3">Cytoplasmic ribonucleoprotein granule</location>
    </subcellularLocation>
</comment>
<comment type="developmental stage">
    <text evidence="3">Expressed in stage 6 egg chambers.</text>
</comment>
<sequence>MVADNIDAGVAIAVADQSSSPVGDKVELPAGNYILVGVDIDTTGRRLMDEIVQLAAYTPTDHFEQYIMPYMNLNPAARQRHQVRVISIGFYRMLKSMQTYKIIKSKSEIAALKDFLNWLEQLKTKAGPSSDGIVLIYHEERKFIPYMILESLKKYGLLERFTASVKSFANSINLAKASIGDANIKNYSLRKLSKILSTTKEEDAACSASTSGSGSGLGSGSSMVSDSVSISPRDSTVTNGDDKQSSKNAVQGKRELFDGNASVRAKLAFDVALQLSNSDGKPEPKSSEALENMFNAIRPFAKLVVSDVLELDIQIENLERQNSFRPVFLNYFKTTLYHRVRAVKFRIVLAENGFDLNTLSAIWAEKNIEGLDIALQSIGRLKSKDKAELLELLDSYFDPKKTTVKPVVKGNSNNNNNYRRRNRRGGRQSVKDARPSSSPSASTEFGAGGDKSRSVSSLPDSTTKTPSPNKPRMHRKRNSRQSLGATPNGLKVAAEISSSGVSELNNSAPPAVTISPVVAQPSPTPVAITASN</sequence>